<sequence length="462" mass="50296">MQEGKISQIIGPVVDVDFPEGQLPSILDALYIVRPDGSRLVLETQQHLGEERVRTVAMESTDGLVRGLSVVNTGKSIQVPVGSEVLGRMLNVVGEPIDGKGAVNTKKTYSIHRSAPKFEDLSTKAEMFETGIKVIDLLEPYSRGGKTGLFGGAGVGKTVLIMELINNIAKQQSGFSVFAGVGERTREGNDLYHEMMESGVIEKTALVFGQMNEPPGARQRVALTGLSIAEYFRDEENRDVLLFIDNIFRFTQAGSEVSALLGRMPSAVGYQPTLATEMGELQDRITSTKNGSVTSVQAIYVPADDLTDPAPATAFAHLDATTVLSRSIAELGIYPAVDPLDSTSRILDPNIVGDDHYNTAQAVKQILQRYKDLQDIIAILGMDELSDEDKLVVSRARKVQRFLSQPFFVAEAFTGLAGKYVKLEETIKGFKEIIAGKHDNLPENAFYLVGTIEEAVEKAKTL</sequence>
<comment type="function">
    <text evidence="1">Produces ATP from ADP in the presence of a proton gradient across the membrane. The catalytic sites are hosted primarily by the beta subunits.</text>
</comment>
<comment type="catalytic activity">
    <reaction evidence="1">
        <text>ATP + H2O + 4 H(+)(in) = ADP + phosphate + 5 H(+)(out)</text>
        <dbReference type="Rhea" id="RHEA:57720"/>
        <dbReference type="ChEBI" id="CHEBI:15377"/>
        <dbReference type="ChEBI" id="CHEBI:15378"/>
        <dbReference type="ChEBI" id="CHEBI:30616"/>
        <dbReference type="ChEBI" id="CHEBI:43474"/>
        <dbReference type="ChEBI" id="CHEBI:456216"/>
        <dbReference type="EC" id="7.1.2.2"/>
    </reaction>
</comment>
<comment type="subunit">
    <text evidence="1">F-type ATPases have 2 components, CF(1) - the catalytic core - and CF(0) - the membrane proton channel. CF(1) has five subunits: alpha(3), beta(3), gamma(1), delta(1), epsilon(1). CF(0) has four main subunits: a(1), b(1), b'(1) and c(9-12).</text>
</comment>
<comment type="subcellular location">
    <subcellularLocation>
        <location evidence="1">Cell inner membrane</location>
        <topology evidence="1">Peripheral membrane protein</topology>
    </subcellularLocation>
</comment>
<comment type="similarity">
    <text evidence="1">Belongs to the ATPase alpha/beta chains family.</text>
</comment>
<proteinExistence type="inferred from homology"/>
<accession>B3EDQ7</accession>
<organism>
    <name type="scientific">Chlorobium limicola (strain DSM 245 / NBRC 103803 / 6330)</name>
    <dbReference type="NCBI Taxonomy" id="290315"/>
    <lineage>
        <taxon>Bacteria</taxon>
        <taxon>Pseudomonadati</taxon>
        <taxon>Chlorobiota</taxon>
        <taxon>Chlorobiia</taxon>
        <taxon>Chlorobiales</taxon>
        <taxon>Chlorobiaceae</taxon>
        <taxon>Chlorobium/Pelodictyon group</taxon>
        <taxon>Chlorobium</taxon>
    </lineage>
</organism>
<name>ATPB_CHLL2</name>
<reference key="1">
    <citation type="submission" date="2008-05" db="EMBL/GenBank/DDBJ databases">
        <title>Complete sequence of Chlorobium limicola DSM 245.</title>
        <authorList>
            <consortium name="US DOE Joint Genome Institute"/>
            <person name="Lucas S."/>
            <person name="Copeland A."/>
            <person name="Lapidus A."/>
            <person name="Glavina del Rio T."/>
            <person name="Dalin E."/>
            <person name="Tice H."/>
            <person name="Bruce D."/>
            <person name="Goodwin L."/>
            <person name="Pitluck S."/>
            <person name="Schmutz J."/>
            <person name="Larimer F."/>
            <person name="Land M."/>
            <person name="Hauser L."/>
            <person name="Kyrpides N."/>
            <person name="Ovchinnikova G."/>
            <person name="Zhao F."/>
            <person name="Li T."/>
            <person name="Liu Z."/>
            <person name="Overmann J."/>
            <person name="Bryant D.A."/>
            <person name="Richardson P."/>
        </authorList>
    </citation>
    <scope>NUCLEOTIDE SEQUENCE [LARGE SCALE GENOMIC DNA]</scope>
    <source>
        <strain>DSM 245 / NBRC 103803 / 6330</strain>
    </source>
</reference>
<dbReference type="EC" id="7.1.2.2" evidence="1"/>
<dbReference type="EMBL" id="CP001097">
    <property type="protein sequence ID" value="ACD89137.1"/>
    <property type="molecule type" value="Genomic_DNA"/>
</dbReference>
<dbReference type="RefSeq" id="WP_012465018.1">
    <property type="nucleotide sequence ID" value="NC_010803.1"/>
</dbReference>
<dbReference type="SMR" id="B3EDQ7"/>
<dbReference type="STRING" id="290315.Clim_0029"/>
<dbReference type="KEGG" id="cli:Clim_0029"/>
<dbReference type="eggNOG" id="COG0055">
    <property type="taxonomic scope" value="Bacteria"/>
</dbReference>
<dbReference type="HOGENOM" id="CLU_022398_0_2_10"/>
<dbReference type="OrthoDB" id="9801639at2"/>
<dbReference type="Proteomes" id="UP000008841">
    <property type="component" value="Chromosome"/>
</dbReference>
<dbReference type="GO" id="GO:0005886">
    <property type="term" value="C:plasma membrane"/>
    <property type="evidence" value="ECO:0007669"/>
    <property type="project" value="UniProtKB-SubCell"/>
</dbReference>
<dbReference type="GO" id="GO:0045259">
    <property type="term" value="C:proton-transporting ATP synthase complex"/>
    <property type="evidence" value="ECO:0007669"/>
    <property type="project" value="UniProtKB-KW"/>
</dbReference>
<dbReference type="GO" id="GO:0005524">
    <property type="term" value="F:ATP binding"/>
    <property type="evidence" value="ECO:0007669"/>
    <property type="project" value="UniProtKB-UniRule"/>
</dbReference>
<dbReference type="GO" id="GO:0016887">
    <property type="term" value="F:ATP hydrolysis activity"/>
    <property type="evidence" value="ECO:0007669"/>
    <property type="project" value="InterPro"/>
</dbReference>
<dbReference type="GO" id="GO:0046933">
    <property type="term" value="F:proton-transporting ATP synthase activity, rotational mechanism"/>
    <property type="evidence" value="ECO:0007669"/>
    <property type="project" value="UniProtKB-UniRule"/>
</dbReference>
<dbReference type="CDD" id="cd18110">
    <property type="entry name" value="ATP-synt_F1_beta_C"/>
    <property type="match status" value="1"/>
</dbReference>
<dbReference type="CDD" id="cd18115">
    <property type="entry name" value="ATP-synt_F1_beta_N"/>
    <property type="match status" value="1"/>
</dbReference>
<dbReference type="CDD" id="cd01133">
    <property type="entry name" value="F1-ATPase_beta_CD"/>
    <property type="match status" value="1"/>
</dbReference>
<dbReference type="FunFam" id="1.10.1140.10:FF:000001">
    <property type="entry name" value="ATP synthase subunit beta"/>
    <property type="match status" value="1"/>
</dbReference>
<dbReference type="FunFam" id="2.40.10.170:FF:000005">
    <property type="entry name" value="ATP synthase subunit beta"/>
    <property type="match status" value="1"/>
</dbReference>
<dbReference type="FunFam" id="3.40.50.300:FF:000026">
    <property type="entry name" value="ATP synthase subunit beta"/>
    <property type="match status" value="1"/>
</dbReference>
<dbReference type="Gene3D" id="2.40.10.170">
    <property type="match status" value="1"/>
</dbReference>
<dbReference type="Gene3D" id="1.10.1140.10">
    <property type="entry name" value="Bovine Mitochondrial F1-atpase, Atp Synthase Beta Chain, Chain D, domain 3"/>
    <property type="match status" value="1"/>
</dbReference>
<dbReference type="Gene3D" id="3.40.50.300">
    <property type="entry name" value="P-loop containing nucleotide triphosphate hydrolases"/>
    <property type="match status" value="1"/>
</dbReference>
<dbReference type="HAMAP" id="MF_01347">
    <property type="entry name" value="ATP_synth_beta_bact"/>
    <property type="match status" value="1"/>
</dbReference>
<dbReference type="InterPro" id="IPR003593">
    <property type="entry name" value="AAA+_ATPase"/>
</dbReference>
<dbReference type="InterPro" id="IPR055190">
    <property type="entry name" value="ATP-synt_VA_C"/>
</dbReference>
<dbReference type="InterPro" id="IPR005722">
    <property type="entry name" value="ATP_synth_F1_bsu"/>
</dbReference>
<dbReference type="InterPro" id="IPR020003">
    <property type="entry name" value="ATPase_a/bsu_AS"/>
</dbReference>
<dbReference type="InterPro" id="IPR050053">
    <property type="entry name" value="ATPase_alpha/beta_chains"/>
</dbReference>
<dbReference type="InterPro" id="IPR004100">
    <property type="entry name" value="ATPase_F1/V1/A1_a/bsu_N"/>
</dbReference>
<dbReference type="InterPro" id="IPR036121">
    <property type="entry name" value="ATPase_F1/V1/A1_a/bsu_N_sf"/>
</dbReference>
<dbReference type="InterPro" id="IPR000194">
    <property type="entry name" value="ATPase_F1/V1/A1_a/bsu_nucl-bd"/>
</dbReference>
<dbReference type="InterPro" id="IPR024034">
    <property type="entry name" value="ATPase_F1/V1_b/a_C"/>
</dbReference>
<dbReference type="InterPro" id="IPR027417">
    <property type="entry name" value="P-loop_NTPase"/>
</dbReference>
<dbReference type="NCBIfam" id="TIGR01039">
    <property type="entry name" value="atpD"/>
    <property type="match status" value="1"/>
</dbReference>
<dbReference type="PANTHER" id="PTHR15184">
    <property type="entry name" value="ATP SYNTHASE"/>
    <property type="match status" value="1"/>
</dbReference>
<dbReference type="PANTHER" id="PTHR15184:SF71">
    <property type="entry name" value="ATP SYNTHASE SUBUNIT BETA, MITOCHONDRIAL"/>
    <property type="match status" value="1"/>
</dbReference>
<dbReference type="Pfam" id="PF00006">
    <property type="entry name" value="ATP-synt_ab"/>
    <property type="match status" value="1"/>
</dbReference>
<dbReference type="Pfam" id="PF02874">
    <property type="entry name" value="ATP-synt_ab_N"/>
    <property type="match status" value="1"/>
</dbReference>
<dbReference type="Pfam" id="PF22919">
    <property type="entry name" value="ATP-synt_VA_C"/>
    <property type="match status" value="1"/>
</dbReference>
<dbReference type="PIRSF" id="PIRSF039072">
    <property type="entry name" value="ATPase_subunit_beta"/>
    <property type="match status" value="1"/>
</dbReference>
<dbReference type="SMART" id="SM00382">
    <property type="entry name" value="AAA"/>
    <property type="match status" value="1"/>
</dbReference>
<dbReference type="SUPFAM" id="SSF47917">
    <property type="entry name" value="C-terminal domain of alpha and beta subunits of F1 ATP synthase"/>
    <property type="match status" value="1"/>
</dbReference>
<dbReference type="SUPFAM" id="SSF50615">
    <property type="entry name" value="N-terminal domain of alpha and beta subunits of F1 ATP synthase"/>
    <property type="match status" value="1"/>
</dbReference>
<dbReference type="SUPFAM" id="SSF52540">
    <property type="entry name" value="P-loop containing nucleoside triphosphate hydrolases"/>
    <property type="match status" value="1"/>
</dbReference>
<dbReference type="PROSITE" id="PS00152">
    <property type="entry name" value="ATPASE_ALPHA_BETA"/>
    <property type="match status" value="1"/>
</dbReference>
<protein>
    <recommendedName>
        <fullName evidence="1">ATP synthase subunit beta</fullName>
        <ecNumber evidence="1">7.1.2.2</ecNumber>
    </recommendedName>
    <alternativeName>
        <fullName evidence="1">ATP synthase F1 sector subunit beta</fullName>
    </alternativeName>
    <alternativeName>
        <fullName evidence="1">F-ATPase subunit beta</fullName>
    </alternativeName>
</protein>
<evidence type="ECO:0000255" key="1">
    <source>
        <dbReference type="HAMAP-Rule" id="MF_01347"/>
    </source>
</evidence>
<gene>
    <name evidence="1" type="primary">atpD</name>
    <name type="ordered locus">Clim_0029</name>
</gene>
<keyword id="KW-0066">ATP synthesis</keyword>
<keyword id="KW-0067">ATP-binding</keyword>
<keyword id="KW-0997">Cell inner membrane</keyword>
<keyword id="KW-1003">Cell membrane</keyword>
<keyword id="KW-0139">CF(1)</keyword>
<keyword id="KW-0375">Hydrogen ion transport</keyword>
<keyword id="KW-0406">Ion transport</keyword>
<keyword id="KW-0472">Membrane</keyword>
<keyword id="KW-0547">Nucleotide-binding</keyword>
<keyword id="KW-1278">Translocase</keyword>
<keyword id="KW-0813">Transport</keyword>
<feature type="chain" id="PRO_1000143484" description="ATP synthase subunit beta">
    <location>
        <begin position="1"/>
        <end position="462"/>
    </location>
</feature>
<feature type="binding site" evidence="1">
    <location>
        <begin position="151"/>
        <end position="158"/>
    </location>
    <ligand>
        <name>ATP</name>
        <dbReference type="ChEBI" id="CHEBI:30616"/>
    </ligand>
</feature>